<name>TPIS_GEOTN</name>
<comment type="function">
    <text evidence="1">Involved in the gluconeogenesis. Catalyzes stereospecifically the conversion of dihydroxyacetone phosphate (DHAP) to D-glyceraldehyde-3-phosphate (G3P).</text>
</comment>
<comment type="catalytic activity">
    <reaction evidence="1">
        <text>D-glyceraldehyde 3-phosphate = dihydroxyacetone phosphate</text>
        <dbReference type="Rhea" id="RHEA:18585"/>
        <dbReference type="ChEBI" id="CHEBI:57642"/>
        <dbReference type="ChEBI" id="CHEBI:59776"/>
        <dbReference type="EC" id="5.3.1.1"/>
    </reaction>
</comment>
<comment type="pathway">
    <text evidence="1">Carbohydrate biosynthesis; gluconeogenesis.</text>
</comment>
<comment type="pathway">
    <text evidence="1">Carbohydrate degradation; glycolysis; D-glyceraldehyde 3-phosphate from glycerone phosphate: step 1/1.</text>
</comment>
<comment type="subunit">
    <text evidence="1">Homodimer.</text>
</comment>
<comment type="subcellular location">
    <subcellularLocation>
        <location evidence="1">Cytoplasm</location>
    </subcellularLocation>
</comment>
<comment type="similarity">
    <text evidence="1">Belongs to the triosephosphate isomerase family.</text>
</comment>
<keyword id="KW-0963">Cytoplasm</keyword>
<keyword id="KW-0312">Gluconeogenesis</keyword>
<keyword id="KW-0324">Glycolysis</keyword>
<keyword id="KW-0413">Isomerase</keyword>
<keyword id="KW-0597">Phosphoprotein</keyword>
<accession>A4ISP6</accession>
<evidence type="ECO:0000255" key="1">
    <source>
        <dbReference type="HAMAP-Rule" id="MF_00147"/>
    </source>
</evidence>
<gene>
    <name evidence="1" type="primary">tpiA</name>
    <name type="ordered locus">GTNG_3005</name>
</gene>
<dbReference type="EC" id="5.3.1.1" evidence="1"/>
<dbReference type="EMBL" id="CP000557">
    <property type="protein sequence ID" value="ABO68350.1"/>
    <property type="molecule type" value="Genomic_DNA"/>
</dbReference>
<dbReference type="RefSeq" id="WP_008880288.1">
    <property type="nucleotide sequence ID" value="NC_009328.1"/>
</dbReference>
<dbReference type="SMR" id="A4ISP6"/>
<dbReference type="GeneID" id="87622846"/>
<dbReference type="KEGG" id="gtn:GTNG_3005"/>
<dbReference type="eggNOG" id="COG0149">
    <property type="taxonomic scope" value="Bacteria"/>
</dbReference>
<dbReference type="HOGENOM" id="CLU_024251_2_3_9"/>
<dbReference type="UniPathway" id="UPA00109">
    <property type="reaction ID" value="UER00189"/>
</dbReference>
<dbReference type="UniPathway" id="UPA00138"/>
<dbReference type="Proteomes" id="UP000001578">
    <property type="component" value="Chromosome"/>
</dbReference>
<dbReference type="GO" id="GO:0005829">
    <property type="term" value="C:cytosol"/>
    <property type="evidence" value="ECO:0007669"/>
    <property type="project" value="TreeGrafter"/>
</dbReference>
<dbReference type="GO" id="GO:0004807">
    <property type="term" value="F:triose-phosphate isomerase activity"/>
    <property type="evidence" value="ECO:0007669"/>
    <property type="project" value="UniProtKB-UniRule"/>
</dbReference>
<dbReference type="GO" id="GO:0006094">
    <property type="term" value="P:gluconeogenesis"/>
    <property type="evidence" value="ECO:0007669"/>
    <property type="project" value="UniProtKB-UniRule"/>
</dbReference>
<dbReference type="GO" id="GO:0046166">
    <property type="term" value="P:glyceraldehyde-3-phosphate biosynthetic process"/>
    <property type="evidence" value="ECO:0007669"/>
    <property type="project" value="TreeGrafter"/>
</dbReference>
<dbReference type="GO" id="GO:0019563">
    <property type="term" value="P:glycerol catabolic process"/>
    <property type="evidence" value="ECO:0007669"/>
    <property type="project" value="TreeGrafter"/>
</dbReference>
<dbReference type="GO" id="GO:0006096">
    <property type="term" value="P:glycolytic process"/>
    <property type="evidence" value="ECO:0007669"/>
    <property type="project" value="UniProtKB-UniRule"/>
</dbReference>
<dbReference type="CDD" id="cd00311">
    <property type="entry name" value="TIM"/>
    <property type="match status" value="1"/>
</dbReference>
<dbReference type="FunFam" id="3.20.20.70:FF:000016">
    <property type="entry name" value="Triosephosphate isomerase"/>
    <property type="match status" value="1"/>
</dbReference>
<dbReference type="Gene3D" id="3.20.20.70">
    <property type="entry name" value="Aldolase class I"/>
    <property type="match status" value="1"/>
</dbReference>
<dbReference type="HAMAP" id="MF_00147_B">
    <property type="entry name" value="TIM_B"/>
    <property type="match status" value="1"/>
</dbReference>
<dbReference type="InterPro" id="IPR013785">
    <property type="entry name" value="Aldolase_TIM"/>
</dbReference>
<dbReference type="InterPro" id="IPR035990">
    <property type="entry name" value="TIM_sf"/>
</dbReference>
<dbReference type="InterPro" id="IPR022896">
    <property type="entry name" value="TrioseP_Isoase_bac/euk"/>
</dbReference>
<dbReference type="InterPro" id="IPR000652">
    <property type="entry name" value="Triosephosphate_isomerase"/>
</dbReference>
<dbReference type="InterPro" id="IPR020861">
    <property type="entry name" value="Triosephosphate_isomerase_AS"/>
</dbReference>
<dbReference type="NCBIfam" id="TIGR00419">
    <property type="entry name" value="tim"/>
    <property type="match status" value="1"/>
</dbReference>
<dbReference type="PANTHER" id="PTHR21139">
    <property type="entry name" value="TRIOSEPHOSPHATE ISOMERASE"/>
    <property type="match status" value="1"/>
</dbReference>
<dbReference type="PANTHER" id="PTHR21139:SF42">
    <property type="entry name" value="TRIOSEPHOSPHATE ISOMERASE"/>
    <property type="match status" value="1"/>
</dbReference>
<dbReference type="Pfam" id="PF00121">
    <property type="entry name" value="TIM"/>
    <property type="match status" value="1"/>
</dbReference>
<dbReference type="SUPFAM" id="SSF51351">
    <property type="entry name" value="Triosephosphate isomerase (TIM)"/>
    <property type="match status" value="1"/>
</dbReference>
<dbReference type="PROSITE" id="PS00171">
    <property type="entry name" value="TIM_1"/>
    <property type="match status" value="1"/>
</dbReference>
<dbReference type="PROSITE" id="PS51440">
    <property type="entry name" value="TIM_2"/>
    <property type="match status" value="1"/>
</dbReference>
<sequence length="253" mass="27201">MRKPIIAGNWKMHKTLTEAVQFVEEVKGLVPPKAEVDSVICAPFLFLDRLVQNTNGTDLQIGAQTMHFADQGAYTGEVSPVMLKDLGVTYVILGHSERRQMFAETDETVNKKVLAAFTRGLVPIICCGETLEEREAGQTNAVVASQVEKALAGLTPDQVKQAVIAYEPIWAIGTGKSSTAEDANNVCGHIRSVVARLFGAEAAEAIRIQYGGSVKPENISDFLAQEHIDGALVGGASLEPASFLKLVEAGRHE</sequence>
<protein>
    <recommendedName>
        <fullName evidence="1">Triosephosphate isomerase</fullName>
        <shortName evidence="1">TIM</shortName>
        <shortName evidence="1">TPI</shortName>
        <ecNumber evidence="1">5.3.1.1</ecNumber>
    </recommendedName>
    <alternativeName>
        <fullName evidence="1">Triose-phosphate isomerase</fullName>
    </alternativeName>
</protein>
<organism>
    <name type="scientific">Geobacillus thermodenitrificans (strain NG80-2)</name>
    <dbReference type="NCBI Taxonomy" id="420246"/>
    <lineage>
        <taxon>Bacteria</taxon>
        <taxon>Bacillati</taxon>
        <taxon>Bacillota</taxon>
        <taxon>Bacilli</taxon>
        <taxon>Bacillales</taxon>
        <taxon>Anoxybacillaceae</taxon>
        <taxon>Geobacillus</taxon>
    </lineage>
</organism>
<proteinExistence type="inferred from homology"/>
<reference key="1">
    <citation type="journal article" date="2007" name="Proc. Natl. Acad. Sci. U.S.A.">
        <title>Genome and proteome of long-chain alkane degrading Geobacillus thermodenitrificans NG80-2 isolated from a deep-subsurface oil reservoir.</title>
        <authorList>
            <person name="Feng L."/>
            <person name="Wang W."/>
            <person name="Cheng J."/>
            <person name="Ren Y."/>
            <person name="Zhao G."/>
            <person name="Gao C."/>
            <person name="Tang Y."/>
            <person name="Liu X."/>
            <person name="Han W."/>
            <person name="Peng X."/>
            <person name="Liu R."/>
            <person name="Wang L."/>
        </authorList>
    </citation>
    <scope>NUCLEOTIDE SEQUENCE [LARGE SCALE GENOMIC DNA]</scope>
    <source>
        <strain>NG80-2</strain>
    </source>
</reference>
<feature type="chain" id="PRO_0000307471" description="Triosephosphate isomerase">
    <location>
        <begin position="1"/>
        <end position="253"/>
    </location>
</feature>
<feature type="active site" description="Electrophile" evidence="1">
    <location>
        <position position="95"/>
    </location>
</feature>
<feature type="active site" description="Proton acceptor" evidence="1">
    <location>
        <position position="167"/>
    </location>
</feature>
<feature type="binding site" evidence="1">
    <location>
        <begin position="9"/>
        <end position="11"/>
    </location>
    <ligand>
        <name>substrate</name>
    </ligand>
</feature>
<feature type="binding site" evidence="1">
    <location>
        <position position="173"/>
    </location>
    <ligand>
        <name>substrate</name>
    </ligand>
</feature>
<feature type="binding site" evidence="1">
    <location>
        <position position="213"/>
    </location>
    <ligand>
        <name>substrate</name>
    </ligand>
</feature>
<feature type="binding site" evidence="1">
    <location>
        <begin position="234"/>
        <end position="235"/>
    </location>
    <ligand>
        <name>substrate</name>
    </ligand>
</feature>
<feature type="modified residue" description="Phosphoserine" evidence="1">
    <location>
        <position position="213"/>
    </location>
</feature>